<evidence type="ECO:0000255" key="1">
    <source>
        <dbReference type="HAMAP-Rule" id="MF_00222"/>
    </source>
</evidence>
<dbReference type="EC" id="1.1.1.25" evidence="1"/>
<dbReference type="EMBL" id="CP000447">
    <property type="protein sequence ID" value="ABI69897.1"/>
    <property type="molecule type" value="Genomic_DNA"/>
</dbReference>
<dbReference type="RefSeq" id="WP_011635526.1">
    <property type="nucleotide sequence ID" value="NC_008345.1"/>
</dbReference>
<dbReference type="SMR" id="Q08A18"/>
<dbReference type="STRING" id="318167.Sfri_0034"/>
<dbReference type="KEGG" id="sfr:Sfri_0034"/>
<dbReference type="eggNOG" id="COG0169">
    <property type="taxonomic scope" value="Bacteria"/>
</dbReference>
<dbReference type="HOGENOM" id="CLU_044063_2_1_6"/>
<dbReference type="OrthoDB" id="9776868at2"/>
<dbReference type="UniPathway" id="UPA00053">
    <property type="reaction ID" value="UER00087"/>
</dbReference>
<dbReference type="Proteomes" id="UP000000684">
    <property type="component" value="Chromosome"/>
</dbReference>
<dbReference type="GO" id="GO:0005829">
    <property type="term" value="C:cytosol"/>
    <property type="evidence" value="ECO:0007669"/>
    <property type="project" value="TreeGrafter"/>
</dbReference>
<dbReference type="GO" id="GO:0050661">
    <property type="term" value="F:NADP binding"/>
    <property type="evidence" value="ECO:0007669"/>
    <property type="project" value="InterPro"/>
</dbReference>
<dbReference type="GO" id="GO:0004764">
    <property type="term" value="F:shikimate 3-dehydrogenase (NADP+) activity"/>
    <property type="evidence" value="ECO:0007669"/>
    <property type="project" value="UniProtKB-UniRule"/>
</dbReference>
<dbReference type="GO" id="GO:0008652">
    <property type="term" value="P:amino acid biosynthetic process"/>
    <property type="evidence" value="ECO:0007669"/>
    <property type="project" value="UniProtKB-KW"/>
</dbReference>
<dbReference type="GO" id="GO:0009073">
    <property type="term" value="P:aromatic amino acid family biosynthetic process"/>
    <property type="evidence" value="ECO:0007669"/>
    <property type="project" value="UniProtKB-KW"/>
</dbReference>
<dbReference type="GO" id="GO:0009423">
    <property type="term" value="P:chorismate biosynthetic process"/>
    <property type="evidence" value="ECO:0007669"/>
    <property type="project" value="UniProtKB-UniRule"/>
</dbReference>
<dbReference type="GO" id="GO:0019632">
    <property type="term" value="P:shikimate metabolic process"/>
    <property type="evidence" value="ECO:0007669"/>
    <property type="project" value="InterPro"/>
</dbReference>
<dbReference type="CDD" id="cd01065">
    <property type="entry name" value="NAD_bind_Shikimate_DH"/>
    <property type="match status" value="1"/>
</dbReference>
<dbReference type="FunFam" id="3.40.50.10860:FF:000006">
    <property type="entry name" value="Shikimate dehydrogenase (NADP(+))"/>
    <property type="match status" value="1"/>
</dbReference>
<dbReference type="FunFam" id="3.40.50.720:FF:000104">
    <property type="entry name" value="Shikimate dehydrogenase (NADP(+))"/>
    <property type="match status" value="1"/>
</dbReference>
<dbReference type="Gene3D" id="3.40.50.10860">
    <property type="entry name" value="Leucine Dehydrogenase, chain A, domain 1"/>
    <property type="match status" value="1"/>
</dbReference>
<dbReference type="Gene3D" id="3.40.50.720">
    <property type="entry name" value="NAD(P)-binding Rossmann-like Domain"/>
    <property type="match status" value="1"/>
</dbReference>
<dbReference type="HAMAP" id="MF_00222">
    <property type="entry name" value="Shikimate_DH_AroE"/>
    <property type="match status" value="1"/>
</dbReference>
<dbReference type="InterPro" id="IPR046346">
    <property type="entry name" value="Aminoacid_DH-like_N_sf"/>
</dbReference>
<dbReference type="InterPro" id="IPR036291">
    <property type="entry name" value="NAD(P)-bd_dom_sf"/>
</dbReference>
<dbReference type="InterPro" id="IPR041121">
    <property type="entry name" value="SDH_C"/>
</dbReference>
<dbReference type="InterPro" id="IPR011342">
    <property type="entry name" value="Shikimate_DH"/>
</dbReference>
<dbReference type="InterPro" id="IPR013708">
    <property type="entry name" value="Shikimate_DH-bd_N"/>
</dbReference>
<dbReference type="InterPro" id="IPR022893">
    <property type="entry name" value="Shikimate_DH_fam"/>
</dbReference>
<dbReference type="InterPro" id="IPR006151">
    <property type="entry name" value="Shikm_DH/Glu-tRNA_Rdtase"/>
</dbReference>
<dbReference type="NCBIfam" id="TIGR00507">
    <property type="entry name" value="aroE"/>
    <property type="match status" value="1"/>
</dbReference>
<dbReference type="NCBIfam" id="NF001310">
    <property type="entry name" value="PRK00258.1-2"/>
    <property type="match status" value="1"/>
</dbReference>
<dbReference type="PANTHER" id="PTHR21089:SF1">
    <property type="entry name" value="BIFUNCTIONAL 3-DEHYDROQUINATE DEHYDRATASE_SHIKIMATE DEHYDROGENASE, CHLOROPLASTIC"/>
    <property type="match status" value="1"/>
</dbReference>
<dbReference type="PANTHER" id="PTHR21089">
    <property type="entry name" value="SHIKIMATE DEHYDROGENASE"/>
    <property type="match status" value="1"/>
</dbReference>
<dbReference type="Pfam" id="PF18317">
    <property type="entry name" value="SDH_C"/>
    <property type="match status" value="1"/>
</dbReference>
<dbReference type="Pfam" id="PF01488">
    <property type="entry name" value="Shikimate_DH"/>
    <property type="match status" value="1"/>
</dbReference>
<dbReference type="Pfam" id="PF08501">
    <property type="entry name" value="Shikimate_dh_N"/>
    <property type="match status" value="1"/>
</dbReference>
<dbReference type="SUPFAM" id="SSF53223">
    <property type="entry name" value="Aminoacid dehydrogenase-like, N-terminal domain"/>
    <property type="match status" value="1"/>
</dbReference>
<dbReference type="SUPFAM" id="SSF51735">
    <property type="entry name" value="NAD(P)-binding Rossmann-fold domains"/>
    <property type="match status" value="1"/>
</dbReference>
<proteinExistence type="inferred from homology"/>
<name>AROE_SHEFN</name>
<keyword id="KW-0028">Amino-acid biosynthesis</keyword>
<keyword id="KW-0057">Aromatic amino acid biosynthesis</keyword>
<keyword id="KW-0521">NADP</keyword>
<keyword id="KW-0560">Oxidoreductase</keyword>
<keyword id="KW-1185">Reference proteome</keyword>
<reference key="1">
    <citation type="submission" date="2006-08" db="EMBL/GenBank/DDBJ databases">
        <title>Complete sequence of Shewanella frigidimarina NCIMB 400.</title>
        <authorList>
            <consortium name="US DOE Joint Genome Institute"/>
            <person name="Copeland A."/>
            <person name="Lucas S."/>
            <person name="Lapidus A."/>
            <person name="Barry K."/>
            <person name="Detter J.C."/>
            <person name="Glavina del Rio T."/>
            <person name="Hammon N."/>
            <person name="Israni S."/>
            <person name="Dalin E."/>
            <person name="Tice H."/>
            <person name="Pitluck S."/>
            <person name="Fredrickson J.K."/>
            <person name="Kolker E."/>
            <person name="McCuel L.A."/>
            <person name="DiChristina T."/>
            <person name="Nealson K.H."/>
            <person name="Newman D."/>
            <person name="Tiedje J.M."/>
            <person name="Zhou J."/>
            <person name="Romine M.F."/>
            <person name="Culley D.E."/>
            <person name="Serres M."/>
            <person name="Chertkov O."/>
            <person name="Brettin T."/>
            <person name="Bruce D."/>
            <person name="Han C."/>
            <person name="Tapia R."/>
            <person name="Gilna P."/>
            <person name="Schmutz J."/>
            <person name="Larimer F."/>
            <person name="Land M."/>
            <person name="Hauser L."/>
            <person name="Kyrpides N."/>
            <person name="Mikhailova N."/>
            <person name="Richardson P."/>
        </authorList>
    </citation>
    <scope>NUCLEOTIDE SEQUENCE [LARGE SCALE GENOMIC DNA]</scope>
    <source>
        <strain>NCIMB 400</strain>
    </source>
</reference>
<organism>
    <name type="scientific">Shewanella frigidimarina (strain NCIMB 400)</name>
    <dbReference type="NCBI Taxonomy" id="318167"/>
    <lineage>
        <taxon>Bacteria</taxon>
        <taxon>Pseudomonadati</taxon>
        <taxon>Pseudomonadota</taxon>
        <taxon>Gammaproteobacteria</taxon>
        <taxon>Alteromonadales</taxon>
        <taxon>Shewanellaceae</taxon>
        <taxon>Shewanella</taxon>
    </lineage>
</organism>
<accession>Q08A18</accession>
<gene>
    <name evidence="1" type="primary">aroE</name>
    <name type="ordered locus">Sfri_0034</name>
</gene>
<sequence length="277" mass="29949">MTDKYAVFGNPIAQSKSPFIHTEFAKQTQQDLSYEAILAPVDQFDSSLVAFFADGGKGANVTAPFKEQAFSMCDELSEMAKLAGSVNTLFNLPYGKIGGDNTDGVGLVNDLEMLFGSLKGKRVLLVGAGGAARGCILPILQHNVAQLIICNRTHEKAEQLQTLFNEYGNFFAKPIEELISPFDLVINSTSAGLSGQLIALPSVIVDETTDCYDMTYSQQTTVFNQWAQAQNARKTADGLGMLVGQAAKSFSLWRGITPDTGSVMRKLRESLAQEAID</sequence>
<feature type="chain" id="PRO_0000325165" description="Shikimate dehydrogenase (NADP(+))">
    <location>
        <begin position="1"/>
        <end position="277"/>
    </location>
</feature>
<feature type="active site" description="Proton acceptor" evidence="1">
    <location>
        <position position="66"/>
    </location>
</feature>
<feature type="binding site" evidence="1">
    <location>
        <begin position="15"/>
        <end position="17"/>
    </location>
    <ligand>
        <name>shikimate</name>
        <dbReference type="ChEBI" id="CHEBI:36208"/>
    </ligand>
</feature>
<feature type="binding site" evidence="1">
    <location>
        <position position="62"/>
    </location>
    <ligand>
        <name>shikimate</name>
        <dbReference type="ChEBI" id="CHEBI:36208"/>
    </ligand>
</feature>
<feature type="binding site" evidence="1">
    <location>
        <position position="78"/>
    </location>
    <ligand>
        <name>NADP(+)</name>
        <dbReference type="ChEBI" id="CHEBI:58349"/>
    </ligand>
</feature>
<feature type="binding site" evidence="1">
    <location>
        <position position="87"/>
    </location>
    <ligand>
        <name>shikimate</name>
        <dbReference type="ChEBI" id="CHEBI:36208"/>
    </ligand>
</feature>
<feature type="binding site" evidence="1">
    <location>
        <position position="103"/>
    </location>
    <ligand>
        <name>shikimate</name>
        <dbReference type="ChEBI" id="CHEBI:36208"/>
    </ligand>
</feature>
<feature type="binding site" evidence="1">
    <location>
        <begin position="127"/>
        <end position="131"/>
    </location>
    <ligand>
        <name>NADP(+)</name>
        <dbReference type="ChEBI" id="CHEBI:58349"/>
    </ligand>
</feature>
<feature type="binding site" evidence="1">
    <location>
        <begin position="151"/>
        <end position="156"/>
    </location>
    <ligand>
        <name>NADP(+)</name>
        <dbReference type="ChEBI" id="CHEBI:58349"/>
    </ligand>
</feature>
<feature type="binding site" evidence="1">
    <location>
        <position position="238"/>
    </location>
    <ligand>
        <name>NADP(+)</name>
        <dbReference type="ChEBI" id="CHEBI:58349"/>
    </ligand>
</feature>
<protein>
    <recommendedName>
        <fullName evidence="1">Shikimate dehydrogenase (NADP(+))</fullName>
        <shortName evidence="1">SDH</shortName>
        <ecNumber evidence="1">1.1.1.25</ecNumber>
    </recommendedName>
</protein>
<comment type="function">
    <text evidence="1">Involved in the biosynthesis of the chorismate, which leads to the biosynthesis of aromatic amino acids. Catalyzes the reversible NADPH linked reduction of 3-dehydroshikimate (DHSA) to yield shikimate (SA).</text>
</comment>
<comment type="catalytic activity">
    <reaction evidence="1">
        <text>shikimate + NADP(+) = 3-dehydroshikimate + NADPH + H(+)</text>
        <dbReference type="Rhea" id="RHEA:17737"/>
        <dbReference type="ChEBI" id="CHEBI:15378"/>
        <dbReference type="ChEBI" id="CHEBI:16630"/>
        <dbReference type="ChEBI" id="CHEBI:36208"/>
        <dbReference type="ChEBI" id="CHEBI:57783"/>
        <dbReference type="ChEBI" id="CHEBI:58349"/>
        <dbReference type="EC" id="1.1.1.25"/>
    </reaction>
</comment>
<comment type="pathway">
    <text evidence="1">Metabolic intermediate biosynthesis; chorismate biosynthesis; chorismate from D-erythrose 4-phosphate and phosphoenolpyruvate: step 4/7.</text>
</comment>
<comment type="subunit">
    <text evidence="1">Homodimer.</text>
</comment>
<comment type="similarity">
    <text evidence="1">Belongs to the shikimate dehydrogenase family.</text>
</comment>